<name>KCNKA_HUMAN</name>
<reference key="1">
    <citation type="journal article" date="2000" name="J. Biol. Chem.">
        <title>Human TREK2, a 2P domain mechano-sensitive K+ channel with multiple regulations by polyunsaturated fatty acids, lysophospholipids and Gs, Gi, and Gq protein-coupled receptors.</title>
        <authorList>
            <person name="Lesage F."/>
            <person name="Terrenoire C."/>
            <person name="Romey G."/>
            <person name="Lazdunski M."/>
        </authorList>
    </citation>
    <scope>NUCLEOTIDE SEQUENCE [MRNA] (ISOFORM A)</scope>
    <scope>FUNCTION</scope>
    <scope>TRANSPORTER ACTIVITY</scope>
    <scope>ACTIVITY REGULATION</scope>
    <scope>TISSUE SPECIFICITY (ISOFORM A)</scope>
</reference>
<reference key="2">
    <citation type="journal article" date="2002" name="J. Physiol. (Lond.)">
        <title>Expression pattern and functional characteristics of two novel splice variants of the two-pore-domain potassium channel TREK-2.</title>
        <authorList>
            <person name="Gu W."/>
            <person name="Schlichthorl G."/>
            <person name="Hirsch J.R."/>
            <person name="Engels H."/>
            <person name="Karschin C."/>
            <person name="Karschin A."/>
            <person name="Derst C."/>
            <person name="Steinlein O.K."/>
            <person name="Daut J."/>
        </authorList>
    </citation>
    <scope>NUCLEOTIDE SEQUENCE [MRNA] (ISOFORMS B AND C)</scope>
    <scope>TISSUE SPECIFICITY (ISOFORMS B AND C)</scope>
</reference>
<reference key="3">
    <citation type="journal article" date="2008" name="Br. J. Pharmacol.">
        <title>Regulation of two-pore-domain (K2P) potassium leak channels by the tyrosine kinase inhibitor genistein.</title>
        <authorList>
            <person name="Gierten J."/>
            <person name="Ficker E."/>
            <person name="Bloehs R."/>
            <person name="Schlomer K."/>
            <person name="Kathofer S."/>
            <person name="Scholz E."/>
            <person name="Zitron E."/>
            <person name="Kiesecker C."/>
            <person name="Bauer A."/>
            <person name="Becker R."/>
            <person name="Katus H.A."/>
            <person name="Karle C.A."/>
            <person name="Thomas D."/>
        </authorList>
    </citation>
    <scope>NUCLEOTIDE SEQUENCE [MRNA] (ISOFORMS A; B AND C)</scope>
    <source>
        <tissue>Brain</tissue>
        <tissue>Kidney</tissue>
        <tissue>Pancreas</tissue>
    </source>
</reference>
<reference key="4">
    <citation type="journal article" date="2004" name="Nat. Genet.">
        <title>Complete sequencing and characterization of 21,243 full-length human cDNAs.</title>
        <authorList>
            <person name="Ota T."/>
            <person name="Suzuki Y."/>
            <person name="Nishikawa T."/>
            <person name="Otsuki T."/>
            <person name="Sugiyama T."/>
            <person name="Irie R."/>
            <person name="Wakamatsu A."/>
            <person name="Hayashi K."/>
            <person name="Sato H."/>
            <person name="Nagai K."/>
            <person name="Kimura K."/>
            <person name="Makita H."/>
            <person name="Sekine M."/>
            <person name="Obayashi M."/>
            <person name="Nishi T."/>
            <person name="Shibahara T."/>
            <person name="Tanaka T."/>
            <person name="Ishii S."/>
            <person name="Yamamoto J."/>
            <person name="Saito K."/>
            <person name="Kawai Y."/>
            <person name="Isono Y."/>
            <person name="Nakamura Y."/>
            <person name="Nagahari K."/>
            <person name="Murakami K."/>
            <person name="Yasuda T."/>
            <person name="Iwayanagi T."/>
            <person name="Wagatsuma M."/>
            <person name="Shiratori A."/>
            <person name="Sudo H."/>
            <person name="Hosoiri T."/>
            <person name="Kaku Y."/>
            <person name="Kodaira H."/>
            <person name="Kondo H."/>
            <person name="Sugawara M."/>
            <person name="Takahashi M."/>
            <person name="Kanda K."/>
            <person name="Yokoi T."/>
            <person name="Furuya T."/>
            <person name="Kikkawa E."/>
            <person name="Omura Y."/>
            <person name="Abe K."/>
            <person name="Kamihara K."/>
            <person name="Katsuta N."/>
            <person name="Sato K."/>
            <person name="Tanikawa M."/>
            <person name="Yamazaki M."/>
            <person name="Ninomiya K."/>
            <person name="Ishibashi T."/>
            <person name="Yamashita H."/>
            <person name="Murakawa K."/>
            <person name="Fujimori K."/>
            <person name="Tanai H."/>
            <person name="Kimata M."/>
            <person name="Watanabe M."/>
            <person name="Hiraoka S."/>
            <person name="Chiba Y."/>
            <person name="Ishida S."/>
            <person name="Ono Y."/>
            <person name="Takiguchi S."/>
            <person name="Watanabe S."/>
            <person name="Yosida M."/>
            <person name="Hotuta T."/>
            <person name="Kusano J."/>
            <person name="Kanehori K."/>
            <person name="Takahashi-Fujii A."/>
            <person name="Hara H."/>
            <person name="Tanase T.-O."/>
            <person name="Nomura Y."/>
            <person name="Togiya S."/>
            <person name="Komai F."/>
            <person name="Hara R."/>
            <person name="Takeuchi K."/>
            <person name="Arita M."/>
            <person name="Imose N."/>
            <person name="Musashino K."/>
            <person name="Yuuki H."/>
            <person name="Oshima A."/>
            <person name="Sasaki N."/>
            <person name="Aotsuka S."/>
            <person name="Yoshikawa Y."/>
            <person name="Matsunawa H."/>
            <person name="Ichihara T."/>
            <person name="Shiohata N."/>
            <person name="Sano S."/>
            <person name="Moriya S."/>
            <person name="Momiyama H."/>
            <person name="Satoh N."/>
            <person name="Takami S."/>
            <person name="Terashima Y."/>
            <person name="Suzuki O."/>
            <person name="Nakagawa S."/>
            <person name="Senoh A."/>
            <person name="Mizoguchi H."/>
            <person name="Goto Y."/>
            <person name="Shimizu F."/>
            <person name="Wakebe H."/>
            <person name="Hishigaki H."/>
            <person name="Watanabe T."/>
            <person name="Sugiyama A."/>
            <person name="Takemoto M."/>
            <person name="Kawakami B."/>
            <person name="Yamazaki M."/>
            <person name="Watanabe K."/>
            <person name="Kumagai A."/>
            <person name="Itakura S."/>
            <person name="Fukuzumi Y."/>
            <person name="Fujimori Y."/>
            <person name="Komiyama M."/>
            <person name="Tashiro H."/>
            <person name="Tanigami A."/>
            <person name="Fujiwara T."/>
            <person name="Ono T."/>
            <person name="Yamada K."/>
            <person name="Fujii Y."/>
            <person name="Ozaki K."/>
            <person name="Hirao M."/>
            <person name="Ohmori Y."/>
            <person name="Kawabata A."/>
            <person name="Hikiji T."/>
            <person name="Kobatake N."/>
            <person name="Inagaki H."/>
            <person name="Ikema Y."/>
            <person name="Okamoto S."/>
            <person name="Okitani R."/>
            <person name="Kawakami T."/>
            <person name="Noguchi S."/>
            <person name="Itoh T."/>
            <person name="Shigeta K."/>
            <person name="Senba T."/>
            <person name="Matsumura K."/>
            <person name="Nakajima Y."/>
            <person name="Mizuno T."/>
            <person name="Morinaga M."/>
            <person name="Sasaki M."/>
            <person name="Togashi T."/>
            <person name="Oyama M."/>
            <person name="Hata H."/>
            <person name="Watanabe M."/>
            <person name="Komatsu T."/>
            <person name="Mizushima-Sugano J."/>
            <person name="Satoh T."/>
            <person name="Shirai Y."/>
            <person name="Takahashi Y."/>
            <person name="Nakagawa K."/>
            <person name="Okumura K."/>
            <person name="Nagase T."/>
            <person name="Nomura N."/>
            <person name="Kikuchi H."/>
            <person name="Masuho Y."/>
            <person name="Yamashita R."/>
            <person name="Nakai K."/>
            <person name="Yada T."/>
            <person name="Nakamura Y."/>
            <person name="Ohara O."/>
            <person name="Isogai T."/>
            <person name="Sugano S."/>
        </authorList>
    </citation>
    <scope>NUCLEOTIDE SEQUENCE [LARGE SCALE MRNA] (ISOFORMS A AND C)</scope>
    <scope>VARIANT THR-512</scope>
    <source>
        <tissue>Brain</tissue>
        <tissue>Cerebellum</tissue>
    </source>
</reference>
<reference key="5">
    <citation type="journal article" date="2003" name="Nature">
        <title>The DNA sequence and analysis of human chromosome 14.</title>
        <authorList>
            <person name="Heilig R."/>
            <person name="Eckenberg R."/>
            <person name="Petit J.-L."/>
            <person name="Fonknechten N."/>
            <person name="Da Silva C."/>
            <person name="Cattolico L."/>
            <person name="Levy M."/>
            <person name="Barbe V."/>
            <person name="De Berardinis V."/>
            <person name="Ureta-Vidal A."/>
            <person name="Pelletier E."/>
            <person name="Vico V."/>
            <person name="Anthouard V."/>
            <person name="Rowen L."/>
            <person name="Madan A."/>
            <person name="Qin S."/>
            <person name="Sun H."/>
            <person name="Du H."/>
            <person name="Pepin K."/>
            <person name="Artiguenave F."/>
            <person name="Robert C."/>
            <person name="Cruaud C."/>
            <person name="Bruels T."/>
            <person name="Jaillon O."/>
            <person name="Friedlander L."/>
            <person name="Samson G."/>
            <person name="Brottier P."/>
            <person name="Cure S."/>
            <person name="Segurens B."/>
            <person name="Aniere F."/>
            <person name="Samain S."/>
            <person name="Crespeau H."/>
            <person name="Abbasi N."/>
            <person name="Aiach N."/>
            <person name="Boscus D."/>
            <person name="Dickhoff R."/>
            <person name="Dors M."/>
            <person name="Dubois I."/>
            <person name="Friedman C."/>
            <person name="Gouyvenoux M."/>
            <person name="James R."/>
            <person name="Madan A."/>
            <person name="Mairey-Estrada B."/>
            <person name="Mangenot S."/>
            <person name="Martins N."/>
            <person name="Menard M."/>
            <person name="Oztas S."/>
            <person name="Ratcliffe A."/>
            <person name="Shaffer T."/>
            <person name="Trask B."/>
            <person name="Vacherie B."/>
            <person name="Bellemere C."/>
            <person name="Belser C."/>
            <person name="Besnard-Gonnet M."/>
            <person name="Bartol-Mavel D."/>
            <person name="Boutard M."/>
            <person name="Briez-Silla S."/>
            <person name="Combette S."/>
            <person name="Dufosse-Laurent V."/>
            <person name="Ferron C."/>
            <person name="Lechaplais C."/>
            <person name="Louesse C."/>
            <person name="Muselet D."/>
            <person name="Magdelenat G."/>
            <person name="Pateau E."/>
            <person name="Petit E."/>
            <person name="Sirvain-Trukniewicz P."/>
            <person name="Trybou A."/>
            <person name="Vega-Czarny N."/>
            <person name="Bataille E."/>
            <person name="Bluet E."/>
            <person name="Bordelais I."/>
            <person name="Dubois M."/>
            <person name="Dumont C."/>
            <person name="Guerin T."/>
            <person name="Haffray S."/>
            <person name="Hammadi R."/>
            <person name="Muanga J."/>
            <person name="Pellouin V."/>
            <person name="Robert D."/>
            <person name="Wunderle E."/>
            <person name="Gauguet G."/>
            <person name="Roy A."/>
            <person name="Sainte-Marthe L."/>
            <person name="Verdier J."/>
            <person name="Verdier-Discala C."/>
            <person name="Hillier L.W."/>
            <person name="Fulton L."/>
            <person name="McPherson J."/>
            <person name="Matsuda F."/>
            <person name="Wilson R."/>
            <person name="Scarpelli C."/>
            <person name="Gyapay G."/>
            <person name="Wincker P."/>
            <person name="Saurin W."/>
            <person name="Quetier F."/>
            <person name="Waterston R."/>
            <person name="Hood L."/>
            <person name="Weissenbach J."/>
        </authorList>
    </citation>
    <scope>NUCLEOTIDE SEQUENCE [LARGE SCALE GENOMIC DNA]</scope>
</reference>
<reference key="6">
    <citation type="submission" date="2005-07" db="EMBL/GenBank/DDBJ databases">
        <authorList>
            <person name="Mural R.J."/>
            <person name="Istrail S."/>
            <person name="Sutton G."/>
            <person name="Florea L."/>
            <person name="Halpern A.L."/>
            <person name="Mobarry C.M."/>
            <person name="Lippert R."/>
            <person name="Walenz B."/>
            <person name="Shatkay H."/>
            <person name="Dew I."/>
            <person name="Miller J.R."/>
            <person name="Flanigan M.J."/>
            <person name="Edwards N.J."/>
            <person name="Bolanos R."/>
            <person name="Fasulo D."/>
            <person name="Halldorsson B.V."/>
            <person name="Hannenhalli S."/>
            <person name="Turner R."/>
            <person name="Yooseph S."/>
            <person name="Lu F."/>
            <person name="Nusskern D.R."/>
            <person name="Shue B.C."/>
            <person name="Zheng X.H."/>
            <person name="Zhong F."/>
            <person name="Delcher A.L."/>
            <person name="Huson D.H."/>
            <person name="Kravitz S.A."/>
            <person name="Mouchard L."/>
            <person name="Reinert K."/>
            <person name="Remington K.A."/>
            <person name="Clark A.G."/>
            <person name="Waterman M.S."/>
            <person name="Eichler E.E."/>
            <person name="Adams M.D."/>
            <person name="Hunkapiller M.W."/>
            <person name="Myers E.W."/>
            <person name="Venter J.C."/>
        </authorList>
    </citation>
    <scope>NUCLEOTIDE SEQUENCE [LARGE SCALE GENOMIC DNA]</scope>
</reference>
<reference key="7">
    <citation type="journal article" date="2004" name="Genome Res.">
        <title>The status, quality, and expansion of the NIH full-length cDNA project: the Mammalian Gene Collection (MGC).</title>
        <authorList>
            <consortium name="The MGC Project Team"/>
        </authorList>
    </citation>
    <scope>NUCLEOTIDE SEQUENCE [LARGE SCALE MRNA] (ISOFORM B)</scope>
</reference>
<reference key="8">
    <citation type="journal article" date="2019" name="Neuron">
        <title>Migraine-Associated TRESK Mutations Increase Neuronal Excitability through Alternative Translation Initiation and Inhibition of TREK.</title>
        <authorList>
            <person name="Royal P."/>
            <person name="Andres-Bilbe A."/>
            <person name="Avalos Prado P."/>
            <person name="Verkest C."/>
            <person name="Wdziekonski B."/>
            <person name="Schaub S."/>
            <person name="Baron A."/>
            <person name="Lesage F."/>
            <person name="Gasull X."/>
            <person name="Levitz J."/>
            <person name="Sandoz G."/>
        </authorList>
    </citation>
    <scope>FUNCTION</scope>
</reference>
<reference key="9">
    <citation type="journal article" date="2016" name="Cell">
        <title>A Non-canonical Voltage-Sensing Mechanism Controls Gating in K2P K(+) Channels.</title>
        <authorList>
            <person name="Schewe M."/>
            <person name="Nematian-Ardestani E."/>
            <person name="Sun H."/>
            <person name="Musinszki M."/>
            <person name="Cordeiro S."/>
            <person name="Bucci G."/>
            <person name="de Groot B.L."/>
            <person name="Tucker S.J."/>
            <person name="Rapedius M."/>
            <person name="Baukrowitz T."/>
        </authorList>
    </citation>
    <scope>FUNCTION</scope>
    <scope>TRANSPORTER ACTIVITY</scope>
    <scope>REACTION MECHANISM</scope>
    <scope>ACTIVITY REGULATION</scope>
    <scope>DOMAIN</scope>
</reference>
<reference key="10">
    <citation type="journal article" date="2024" name="Nat. Commun.">
        <title>Tension activation of mechanosensitive two-pore domain K+ channels TRAAK, TREK-1, and TREK-2.</title>
        <authorList>
            <person name="Sorum B."/>
            <person name="Docter T."/>
            <person name="Panico V."/>
            <person name="Rietmeijer R.A."/>
            <person name="Brohawn S.G."/>
        </authorList>
    </citation>
    <scope>FUNCTION</scope>
    <scope>ACTIVITY REGULATION</scope>
</reference>
<reference key="11">
    <citation type="journal article" date="2015" name="Science">
        <title>K2P channel gating mechanisms revealed by structures of TREK-2 and a complex with Prozac.</title>
        <authorList>
            <person name="Dong Y.Y."/>
            <person name="Pike A.C."/>
            <person name="Mackenzie A."/>
            <person name="McClenaghan C."/>
            <person name="Aryal P."/>
            <person name="Dong L."/>
            <person name="Quigley A."/>
            <person name="Grieben M."/>
            <person name="Goubin S."/>
            <person name="Mukhopadhyay S."/>
            <person name="Ruda G.F."/>
            <person name="Clausen M.V."/>
            <person name="Cao L."/>
            <person name="Brennan P.E."/>
            <person name="Burgess-Brown N.A."/>
            <person name="Sansom M.S."/>
            <person name="Tucker S.J."/>
            <person name="Carpenter E.P."/>
        </authorList>
    </citation>
    <scope>X-RAY CRYSTALLOGRAPHY (3.20 ANGSTROMS) OF 62-335 IN COMPLEX WITH K(+)</scope>
    <scope>DISULFIDE BONDS</scope>
    <scope>SUBUNIT</scope>
    <scope>FUNCTION</scope>
    <scope>TRANSPORTER ACTIVITY</scope>
    <scope>ACTIVITY REGULATION</scope>
    <scope>REGION</scope>
    <scope>DOMAIN</scope>
    <scope>MUTAGENESIS OF GLU-98; HIS-151; ALA-174; PHE-210; ARG-232; PHE-239; TYR-310; LEU-315; MET-317 AND TRP-321</scope>
</reference>
<evidence type="ECO:0000250" key="1">
    <source>
        <dbReference type="UniProtKB" id="Q8BUW1"/>
    </source>
</evidence>
<evidence type="ECO:0000255" key="2"/>
<evidence type="ECO:0000256" key="3">
    <source>
        <dbReference type="SAM" id="MobiDB-lite"/>
    </source>
</evidence>
<evidence type="ECO:0000269" key="4">
    <source>
    </source>
</evidence>
<evidence type="ECO:0000269" key="5">
    <source>
    </source>
</evidence>
<evidence type="ECO:0000269" key="6">
    <source>
    </source>
</evidence>
<evidence type="ECO:0000269" key="7">
    <source>
    </source>
</evidence>
<evidence type="ECO:0000269" key="8">
    <source>
    </source>
</evidence>
<evidence type="ECO:0000269" key="9">
    <source>
    </source>
</evidence>
<evidence type="ECO:0000269" key="10">
    <source>
    </source>
</evidence>
<evidence type="ECO:0000303" key="11">
    <source>
    </source>
</evidence>
<evidence type="ECO:0000303" key="12">
    <source>
    </source>
</evidence>
<evidence type="ECO:0000303" key="13">
    <source>
    </source>
</evidence>
<evidence type="ECO:0000303" key="14">
    <source>
    </source>
</evidence>
<evidence type="ECO:0000303" key="15">
    <source>
    </source>
</evidence>
<evidence type="ECO:0000305" key="16"/>
<evidence type="ECO:0000305" key="17">
    <source>
    </source>
</evidence>
<evidence type="ECO:0000312" key="18">
    <source>
        <dbReference type="HGNC" id="HGNC:6273"/>
    </source>
</evidence>
<evidence type="ECO:0007744" key="19">
    <source>
        <dbReference type="PDB" id="4BW5"/>
    </source>
</evidence>
<evidence type="ECO:0007744" key="20">
    <source>
        <dbReference type="PDB" id="4XDK"/>
    </source>
</evidence>
<evidence type="ECO:0007829" key="21">
    <source>
        <dbReference type="PDB" id="4BW5"/>
    </source>
</evidence>
<evidence type="ECO:0007829" key="22">
    <source>
        <dbReference type="PDB" id="4XDL"/>
    </source>
</evidence>
<evidence type="ECO:0007829" key="23">
    <source>
        <dbReference type="PDB" id="8QZ3"/>
    </source>
</evidence>
<evidence type="ECO:0007829" key="24">
    <source>
        <dbReference type="PDB" id="8QZ4"/>
    </source>
</evidence>
<dbReference type="EMBL" id="AF279890">
    <property type="protein sequence ID" value="AAG15191.1"/>
    <property type="molecule type" value="mRNA"/>
</dbReference>
<dbReference type="EMBL" id="AF385399">
    <property type="protein sequence ID" value="AAL95705.1"/>
    <property type="molecule type" value="mRNA"/>
</dbReference>
<dbReference type="EMBL" id="AF385400">
    <property type="protein sequence ID" value="AAL95706.1"/>
    <property type="molecule type" value="mRNA"/>
</dbReference>
<dbReference type="EMBL" id="EU978938">
    <property type="protein sequence ID" value="ACH86097.1"/>
    <property type="molecule type" value="mRNA"/>
</dbReference>
<dbReference type="EMBL" id="EU978939">
    <property type="protein sequence ID" value="ACH86098.1"/>
    <property type="molecule type" value="mRNA"/>
</dbReference>
<dbReference type="EMBL" id="EU978940">
    <property type="protein sequence ID" value="ACH86099.1"/>
    <property type="molecule type" value="mRNA"/>
</dbReference>
<dbReference type="EMBL" id="EU978941">
    <property type="protein sequence ID" value="ACH86100.1"/>
    <property type="molecule type" value="mRNA"/>
</dbReference>
<dbReference type="EMBL" id="AK313499">
    <property type="protein sequence ID" value="BAG36281.1"/>
    <property type="molecule type" value="mRNA"/>
</dbReference>
<dbReference type="EMBL" id="AK315263">
    <property type="protein sequence ID" value="BAG37680.1"/>
    <property type="molecule type" value="mRNA"/>
</dbReference>
<dbReference type="EMBL" id="AL049834">
    <property type="status" value="NOT_ANNOTATED_CDS"/>
    <property type="molecule type" value="Genomic_DNA"/>
</dbReference>
<dbReference type="EMBL" id="AL133279">
    <property type="status" value="NOT_ANNOTATED_CDS"/>
    <property type="molecule type" value="Genomic_DNA"/>
</dbReference>
<dbReference type="EMBL" id="CH471061">
    <property type="protein sequence ID" value="EAW81373.1"/>
    <property type="molecule type" value="Genomic_DNA"/>
</dbReference>
<dbReference type="EMBL" id="CH471061">
    <property type="protein sequence ID" value="EAW81374.1"/>
    <property type="molecule type" value="Genomic_DNA"/>
</dbReference>
<dbReference type="EMBL" id="CH471061">
    <property type="protein sequence ID" value="EAW81375.1"/>
    <property type="molecule type" value="Genomic_DNA"/>
</dbReference>
<dbReference type="EMBL" id="BC075021">
    <property type="protein sequence ID" value="AAH75021.1"/>
    <property type="molecule type" value="mRNA"/>
</dbReference>
<dbReference type="EMBL" id="BC075022">
    <property type="protein sequence ID" value="AAH75022.1"/>
    <property type="molecule type" value="mRNA"/>
</dbReference>
<dbReference type="CCDS" id="CCDS9880.1">
    <molecule id="P57789-1"/>
</dbReference>
<dbReference type="CCDS" id="CCDS9881.1">
    <molecule id="P57789-3"/>
</dbReference>
<dbReference type="CCDS" id="CCDS9882.1">
    <molecule id="P57789-4"/>
</dbReference>
<dbReference type="RefSeq" id="NP_066984.1">
    <molecule id="P57789-1"/>
    <property type="nucleotide sequence ID" value="NM_021161.5"/>
</dbReference>
<dbReference type="RefSeq" id="NP_612190.1">
    <molecule id="P57789-3"/>
    <property type="nucleotide sequence ID" value="NM_138317.3"/>
</dbReference>
<dbReference type="RefSeq" id="NP_612191.1">
    <molecule id="P57789-4"/>
    <property type="nucleotide sequence ID" value="NM_138318.3"/>
</dbReference>
<dbReference type="PDB" id="4BW5">
    <property type="method" value="X-ray"/>
    <property type="resolution" value="3.20 A"/>
    <property type="chains" value="A/B/C/D=62-335"/>
</dbReference>
<dbReference type="PDB" id="4XDJ">
    <property type="method" value="X-ray"/>
    <property type="resolution" value="3.80 A"/>
    <property type="chains" value="A/B/C/D=62-335"/>
</dbReference>
<dbReference type="PDB" id="4XDK">
    <property type="method" value="X-ray"/>
    <property type="resolution" value="3.60 A"/>
    <property type="chains" value="A/B/C/D=62-335"/>
</dbReference>
<dbReference type="PDB" id="4XDL">
    <property type="method" value="X-ray"/>
    <property type="resolution" value="3.50 A"/>
    <property type="chains" value="A/B/C/D=62-335"/>
</dbReference>
<dbReference type="PDB" id="8QZ1">
    <property type="method" value="X-ray"/>
    <property type="resolution" value="3.59 A"/>
    <property type="chains" value="A/B=62-335"/>
</dbReference>
<dbReference type="PDB" id="8QZ2">
    <property type="method" value="X-ray"/>
    <property type="resolution" value="3.50 A"/>
    <property type="chains" value="A/B=70-335"/>
</dbReference>
<dbReference type="PDB" id="8QZ3">
    <property type="method" value="X-ray"/>
    <property type="resolution" value="2.40 A"/>
    <property type="chains" value="A/B=70-335"/>
</dbReference>
<dbReference type="PDB" id="8QZ4">
    <property type="method" value="X-ray"/>
    <property type="resolution" value="3.20 A"/>
    <property type="chains" value="A/B=62-335"/>
</dbReference>
<dbReference type="PDBsum" id="4BW5"/>
<dbReference type="PDBsum" id="4XDJ"/>
<dbReference type="PDBsum" id="4XDK"/>
<dbReference type="PDBsum" id="4XDL"/>
<dbReference type="PDBsum" id="8QZ1"/>
<dbReference type="PDBsum" id="8QZ2"/>
<dbReference type="PDBsum" id="8QZ3"/>
<dbReference type="PDBsum" id="8QZ4"/>
<dbReference type="EMDB" id="EMD-19066"/>
<dbReference type="SMR" id="P57789"/>
<dbReference type="BioGRID" id="119924">
    <property type="interactions" value="1"/>
</dbReference>
<dbReference type="CORUM" id="P57789"/>
<dbReference type="DIP" id="DIP-44050N"/>
<dbReference type="FunCoup" id="P57789">
    <property type="interactions" value="551"/>
</dbReference>
<dbReference type="IntAct" id="P57789">
    <property type="interactions" value="1"/>
</dbReference>
<dbReference type="STRING" id="9606.ENSP00000312811"/>
<dbReference type="BindingDB" id="P57789"/>
<dbReference type="ChEMBL" id="CHEMBL2331041"/>
<dbReference type="DrugCentral" id="P57789"/>
<dbReference type="GuidetoPHARMACOLOGY" id="521"/>
<dbReference type="GlyCosmos" id="P57789">
    <property type="glycosylation" value="3 sites, No reported glycans"/>
</dbReference>
<dbReference type="GlyGen" id="P57789">
    <property type="glycosylation" value="6 sites, 1 O-linked glycan (1 site)"/>
</dbReference>
<dbReference type="iPTMnet" id="P57789"/>
<dbReference type="PhosphoSitePlus" id="P57789"/>
<dbReference type="BioMuta" id="KCNK10"/>
<dbReference type="DMDM" id="13431412"/>
<dbReference type="MassIVE" id="P57789"/>
<dbReference type="PaxDb" id="9606-ENSP00000312811"/>
<dbReference type="PeptideAtlas" id="P57789"/>
<dbReference type="ProteomicsDB" id="57038">
    <molecule id="P57789-1"/>
</dbReference>
<dbReference type="ProteomicsDB" id="57039">
    <molecule id="P57789-3"/>
</dbReference>
<dbReference type="ProteomicsDB" id="57040">
    <molecule id="P57789-4"/>
</dbReference>
<dbReference type="Antibodypedia" id="13325">
    <property type="antibodies" value="219 antibodies from 25 providers"/>
</dbReference>
<dbReference type="DNASU" id="54207"/>
<dbReference type="Ensembl" id="ENST00000312350.9">
    <molecule id="P57789-4"/>
    <property type="protein sequence ID" value="ENSP00000310568.5"/>
    <property type="gene ID" value="ENSG00000100433.16"/>
</dbReference>
<dbReference type="Ensembl" id="ENST00000319231.10">
    <molecule id="P57789-3"/>
    <property type="protein sequence ID" value="ENSP00000312811.5"/>
    <property type="gene ID" value="ENSG00000100433.16"/>
</dbReference>
<dbReference type="Ensembl" id="ENST00000340700.9">
    <molecule id="P57789-1"/>
    <property type="protein sequence ID" value="ENSP00000343104.5"/>
    <property type="gene ID" value="ENSG00000100433.16"/>
</dbReference>
<dbReference type="GeneID" id="54207"/>
<dbReference type="KEGG" id="hsa:54207"/>
<dbReference type="MANE-Select" id="ENST00000319231.10">
    <molecule id="P57789-3"/>
    <property type="protein sequence ID" value="ENSP00000312811.5"/>
    <property type="RefSeq nucleotide sequence ID" value="NM_138317.3"/>
    <property type="RefSeq protein sequence ID" value="NP_612190.1"/>
</dbReference>
<dbReference type="UCSC" id="uc001xwm.4">
    <molecule id="P57789-1"/>
    <property type="organism name" value="human"/>
</dbReference>
<dbReference type="AGR" id="HGNC:6273"/>
<dbReference type="CTD" id="54207"/>
<dbReference type="DisGeNET" id="54207"/>
<dbReference type="GeneCards" id="KCNK10"/>
<dbReference type="HGNC" id="HGNC:6273">
    <property type="gene designation" value="KCNK10"/>
</dbReference>
<dbReference type="HPA" id="ENSG00000100433">
    <property type="expression patterns" value="Tissue enhanced (brain, intestine, stomach)"/>
</dbReference>
<dbReference type="MIM" id="605873">
    <property type="type" value="gene"/>
</dbReference>
<dbReference type="neXtProt" id="NX_P57789"/>
<dbReference type="OpenTargets" id="ENSG00000100433"/>
<dbReference type="PharmGKB" id="PA30053"/>
<dbReference type="VEuPathDB" id="HostDB:ENSG00000100433"/>
<dbReference type="eggNOG" id="KOG1418">
    <property type="taxonomic scope" value="Eukaryota"/>
</dbReference>
<dbReference type="GeneTree" id="ENSGT00940000156147"/>
<dbReference type="HOGENOM" id="CLU_022504_10_0_1"/>
<dbReference type="InParanoid" id="P57789"/>
<dbReference type="OMA" id="MNWYKPL"/>
<dbReference type="OrthoDB" id="297496at2759"/>
<dbReference type="PAN-GO" id="P57789">
    <property type="GO annotations" value="5 GO annotations based on evolutionary models"/>
</dbReference>
<dbReference type="PhylomeDB" id="P57789"/>
<dbReference type="TreeFam" id="TF313947"/>
<dbReference type="PathwayCommons" id="P57789"/>
<dbReference type="Reactome" id="R-HSA-1299503">
    <property type="pathway name" value="TWIK related potassium channel (TREK)"/>
</dbReference>
<dbReference type="Reactome" id="R-HSA-5576886">
    <property type="pathway name" value="Phase 4 - resting membrane potential"/>
</dbReference>
<dbReference type="SignaLink" id="P57789"/>
<dbReference type="BioGRID-ORCS" id="54207">
    <property type="hits" value="9 hits in 1135 CRISPR screens"/>
</dbReference>
<dbReference type="ChiTaRS" id="KCNK10">
    <property type="organism name" value="human"/>
</dbReference>
<dbReference type="EvolutionaryTrace" id="P57789"/>
<dbReference type="GeneWiki" id="KCNK10"/>
<dbReference type="GenomeRNAi" id="54207"/>
<dbReference type="Pharos" id="P57789">
    <property type="development level" value="Tclin"/>
</dbReference>
<dbReference type="PRO" id="PR:P57789"/>
<dbReference type="Proteomes" id="UP000005640">
    <property type="component" value="Chromosome 14"/>
</dbReference>
<dbReference type="RNAct" id="P57789">
    <property type="molecule type" value="protein"/>
</dbReference>
<dbReference type="Bgee" id="ENSG00000100433">
    <property type="expression patterns" value="Expressed in cerebellar vermis and 121 other cell types or tissues"/>
</dbReference>
<dbReference type="ExpressionAtlas" id="P57789">
    <property type="expression patterns" value="baseline and differential"/>
</dbReference>
<dbReference type="GO" id="GO:0034702">
    <property type="term" value="C:monoatomic ion channel complex"/>
    <property type="evidence" value="ECO:0007669"/>
    <property type="project" value="UniProtKB-KW"/>
</dbReference>
<dbReference type="GO" id="GO:0005886">
    <property type="term" value="C:plasma membrane"/>
    <property type="evidence" value="ECO:0000318"/>
    <property type="project" value="GO_Central"/>
</dbReference>
<dbReference type="GO" id="GO:0098782">
    <property type="term" value="F:mechanosensitive potassium channel activity"/>
    <property type="evidence" value="ECO:0000314"/>
    <property type="project" value="UniProtKB"/>
</dbReference>
<dbReference type="GO" id="GO:0015271">
    <property type="term" value="F:outward rectifier potassium channel activity"/>
    <property type="evidence" value="ECO:0000314"/>
    <property type="project" value="UniProtKB"/>
</dbReference>
<dbReference type="GO" id="GO:0005267">
    <property type="term" value="F:potassium channel activity"/>
    <property type="evidence" value="ECO:0000304"/>
    <property type="project" value="ProtInc"/>
</dbReference>
<dbReference type="GO" id="GO:0022841">
    <property type="term" value="F:potassium ion leak channel activity"/>
    <property type="evidence" value="ECO:0000314"/>
    <property type="project" value="UniProtKB"/>
</dbReference>
<dbReference type="GO" id="GO:1904551">
    <property type="term" value="P:cellular response to arachidonate"/>
    <property type="evidence" value="ECO:0000314"/>
    <property type="project" value="UniProtKB"/>
</dbReference>
<dbReference type="GO" id="GO:0071805">
    <property type="term" value="P:potassium ion transmembrane transport"/>
    <property type="evidence" value="ECO:0000318"/>
    <property type="project" value="GO_Central"/>
</dbReference>
<dbReference type="GO" id="GO:0007165">
    <property type="term" value="P:signal transduction"/>
    <property type="evidence" value="ECO:0000303"/>
    <property type="project" value="ProtInc"/>
</dbReference>
<dbReference type="FunFam" id="1.10.287.70:FF:000043">
    <property type="entry name" value="Potassium channel subfamily K member 10 isoform 2"/>
    <property type="match status" value="1"/>
</dbReference>
<dbReference type="Gene3D" id="1.10.287.70">
    <property type="match status" value="1"/>
</dbReference>
<dbReference type="InterPro" id="IPR003280">
    <property type="entry name" value="2pore_dom_K_chnl"/>
</dbReference>
<dbReference type="InterPro" id="IPR003976">
    <property type="entry name" value="2pore_dom_K_chnl_TREK"/>
</dbReference>
<dbReference type="InterPro" id="IPR013099">
    <property type="entry name" value="K_chnl_dom"/>
</dbReference>
<dbReference type="PANTHER" id="PTHR11003:SF32">
    <property type="entry name" value="POTASSIUM CHANNEL SUBFAMILY K MEMBER 10"/>
    <property type="match status" value="1"/>
</dbReference>
<dbReference type="PANTHER" id="PTHR11003">
    <property type="entry name" value="POTASSIUM CHANNEL, SUBFAMILY K"/>
    <property type="match status" value="1"/>
</dbReference>
<dbReference type="Pfam" id="PF07885">
    <property type="entry name" value="Ion_trans_2"/>
    <property type="match status" value="2"/>
</dbReference>
<dbReference type="PRINTS" id="PR01333">
    <property type="entry name" value="2POREKCHANEL"/>
</dbReference>
<dbReference type="PRINTS" id="PR01499">
    <property type="entry name" value="TREKCHANNEL"/>
</dbReference>
<dbReference type="SUPFAM" id="SSF81324">
    <property type="entry name" value="Voltage-gated potassium channels"/>
    <property type="match status" value="2"/>
</dbReference>
<sequence length="538" mass="59765">MFFLYTDFFLSLVAVPAAAPVCQPKSATNGQPPAPAPTPTPRLSISSRATVVARMEGTSQGGLQTVMKWKTVVAIFVVVVVYLVTGGLVFRALEQPFESSQKNTIALEKAEFLRDHVCVSPQELETLIQHALDADNAGVSPIGNSSNNSSHWDLGSAFFFAGTVITTIGYGNIAPSTEGGKIFCILYAIFGIPLFGFLLAGIGDQLGTIFGKSIARVEKVFRKKQVSQTKIRVISTILFILAGCIVFVTIPAVIFKYIEGWTALESIYFVVVTLTTVGFGDFVAGGNAGINYREWYKPLVWFWILVGLAYFAAVLSMIGDWLRVLSKKTKEEVGEIKAHAAEWKANVTAEFRETRRRLSVEIHDKLQRAATIRSMERRRLGLDQRAHSLDMLSPEKRSVFAALDTGRFKASSQESINNRPNNLRLKGPEQLNKHGQGASEDNIINKFGSTSRLTKRKNKDLKKTLPEDVQKIYKTFRNYSLDEEKKEEETEKMCNSDNSSTAMLTDCIQQHAELENGMIPTDTKDREPENNSLLEDRN</sequence>
<organism>
    <name type="scientific">Homo sapiens</name>
    <name type="common">Human</name>
    <dbReference type="NCBI Taxonomy" id="9606"/>
    <lineage>
        <taxon>Eukaryota</taxon>
        <taxon>Metazoa</taxon>
        <taxon>Chordata</taxon>
        <taxon>Craniata</taxon>
        <taxon>Vertebrata</taxon>
        <taxon>Euteleostomi</taxon>
        <taxon>Mammalia</taxon>
        <taxon>Eutheria</taxon>
        <taxon>Euarchontoglires</taxon>
        <taxon>Primates</taxon>
        <taxon>Haplorrhini</taxon>
        <taxon>Catarrhini</taxon>
        <taxon>Hominidae</taxon>
        <taxon>Homo</taxon>
    </lineage>
</organism>
<comment type="function">
    <text evidence="1 4 7 8 9 10">K(+) channel that conducts voltage-dependent outward rectifying currents upon membrane depolarization. Voltage sensing is coupled to K(+) electrochemical gradient in an 'ion flux gating' mode where outward but not inward ion flow opens the gate. Converts to voltage-independent 'leak' conductance mode upon stimulation by various stimuli including mechanical membrane stretch, acidic pH, heat and lipids (PubMed:10880510, PubMed:25766236, PubMed:26919430, PubMed:38605031). Homo- and heterodimerizes to form functional channels with distinct regulatory and gating properties (PubMed:30573346). In trigeminal ganglia sensory neurons, the heterodimer of KCNK10/TREK-2 and KCNK18/TRESK inhibits neuronal firing and neurogenic inflammation by stabilizing the resting membrane potential at K(+) equilibrium potential as well as by regulating the threshold of action potentials and the spike frequency (By similarity). Permeable to other monovalent ions such as Rb(+) and Cs(+) (PubMed:26919430).</text>
</comment>
<comment type="catalytic activity">
    <reaction evidence="4 7 8">
        <text>K(+)(in) = K(+)(out)</text>
        <dbReference type="Rhea" id="RHEA:29463"/>
        <dbReference type="ChEBI" id="CHEBI:29103"/>
    </reaction>
</comment>
<comment type="catalytic activity">
    <reaction evidence="8">
        <text>Rb(+)(in) = Rb(+)(out)</text>
        <dbReference type="Rhea" id="RHEA:78547"/>
        <dbReference type="ChEBI" id="CHEBI:49847"/>
    </reaction>
</comment>
<comment type="catalytic activity">
    <reaction evidence="8">
        <text>Cs(+)(in) = Cs(+)(out)</text>
        <dbReference type="Rhea" id="RHEA:78555"/>
        <dbReference type="ChEBI" id="CHEBI:49547"/>
    </reaction>
</comment>
<comment type="activity regulation">
    <text evidence="4 7 8 10">Activated by various stimuli including acidic pH, anesthetics chloroform, halothane and isoflurane, mechanical stretch, lipids such as arachidonic, docosahexaenoic and linoleic polyunsaturated fatty acids and lysophosphatidylcholine and lysophosphatidylinositol lysophospholipids (PubMed:10880510, PubMed:25766236, PubMed:26919430, PubMed:38605031). Inhibited by norfluoxetine, the active metabolite of antidepressant fluoxetine (Prozac) (PubMed:25766236).</text>
</comment>
<comment type="subunit">
    <text evidence="1 7">Homodimer; disulfide-linked (PubMed:25766236). Forms heterodimers with other 2-pore domain K(+) channel subunits, such as KCNK2, KCNK4 and KCNK18 (By similarity).</text>
</comment>
<comment type="subcellular location">
    <subcellularLocation>
        <location evidence="1">Cell membrane</location>
        <topology evidence="2">Multi-pass membrane protein</topology>
    </subcellularLocation>
</comment>
<comment type="alternative products">
    <event type="alternative splicing"/>
    <isoform>
        <id>P57789-1</id>
        <name>A</name>
        <name>TREK-2a</name>
        <sequence type="displayed"/>
    </isoform>
    <isoform>
        <id>P57789-4</id>
        <name>B</name>
        <name evidence="11">TREK-2b</name>
        <sequence type="described" ref="VSP_006697"/>
    </isoform>
    <isoform>
        <id>P57789-3</id>
        <name>C</name>
        <name evidence="11">TREK-2c</name>
        <sequence type="described" ref="VSP_006698"/>
    </isoform>
</comment>
<comment type="tissue specificity">
    <molecule>Isoform A</molecule>
    <text evidence="4">Abundantly expressed in pancreas and kidney and to a lower level in brain, testis, colon, and small intestine. In brain, mainly expressed in cerebellum, occipital lobe, putamen, and thalamus. No expression is detected in amygdala and spinal cord.</text>
</comment>
<comment type="tissue specificity">
    <molecule>Isoform B</molecule>
    <text evidence="5">Strongly expressed in kidney (primarily in the proximal tubule) and pancreas.</text>
</comment>
<comment type="tissue specificity">
    <molecule>Isoform C</molecule>
    <text evidence="5">Abundantly expressed in brain.</text>
</comment>
<comment type="domain">
    <text evidence="7 8">Each subunit contributes two pore-forming domains 1 and 2 which assemble to form a single pore with M2 and M4 transmembrane helices lining the central cavity and M1 and M3 facing the lipid bilayer. The transmembrane helices are bridged by the selectivity filters 1 and 2 carrying a signature sequence TxTTxGYGD that coordinate the permeant ions. Up to four ions can simultaneously occupy the selectivity filter and at least two elementary charges must translocate across the filter to convert it into the open conformation.</text>
</comment>
<comment type="similarity">
    <text evidence="16">Belongs to the two pore domain potassium channel (TC 1.A.1.8) family.</text>
</comment>
<keyword id="KW-0002">3D-structure</keyword>
<keyword id="KW-0025">Alternative splicing</keyword>
<keyword id="KW-1003">Cell membrane</keyword>
<keyword id="KW-1015">Disulfide bond</keyword>
<keyword id="KW-0325">Glycoprotein</keyword>
<keyword id="KW-0407">Ion channel</keyword>
<keyword id="KW-0406">Ion transport</keyword>
<keyword id="KW-0472">Membrane</keyword>
<keyword id="KW-0630">Potassium</keyword>
<keyword id="KW-0631">Potassium channel</keyword>
<keyword id="KW-0633">Potassium transport</keyword>
<keyword id="KW-1267">Proteomics identification</keyword>
<keyword id="KW-1185">Reference proteome</keyword>
<keyword id="KW-0812">Transmembrane</keyword>
<keyword id="KW-1133">Transmembrane helix</keyword>
<keyword id="KW-0813">Transport</keyword>
<keyword id="KW-0851">Voltage-gated channel</keyword>
<gene>
    <name evidence="15 18" type="primary">KCNK10</name>
    <name evidence="15" type="synonym">TREK2</name>
</gene>
<protein>
    <recommendedName>
        <fullName>Potassium channel subfamily K member 10</fullName>
    </recommendedName>
    <alternativeName>
        <fullName>Outward rectifying potassium channel protein TREK-2</fullName>
    </alternativeName>
    <alternativeName>
        <fullName>TREK-2 K(+) channel subunit</fullName>
    </alternativeName>
</protein>
<feature type="chain" id="PRO_0000101758" description="Potassium channel subfamily K member 10">
    <location>
        <begin position="1"/>
        <end position="538"/>
    </location>
</feature>
<feature type="topological domain" description="Cytoplasmic" evidence="2">
    <location>
        <begin position="1"/>
        <end position="71"/>
    </location>
</feature>
<feature type="transmembrane region" description="Helical" evidence="2">
    <location>
        <begin position="72"/>
        <end position="92"/>
    </location>
</feature>
<feature type="intramembrane region" description="Pore-forming; Name=Pore-forming 1" evidence="19">
    <location>
        <begin position="154"/>
        <end position="180"/>
    </location>
</feature>
<feature type="transmembrane region" description="Helical" evidence="2">
    <location>
        <begin position="182"/>
        <end position="202"/>
    </location>
</feature>
<feature type="topological domain" description="Cytoplasmic" evidence="2">
    <location>
        <begin position="203"/>
        <end position="233"/>
    </location>
</feature>
<feature type="transmembrane region" description="Helical" evidence="2">
    <location>
        <begin position="234"/>
        <end position="254"/>
    </location>
</feature>
<feature type="intramembrane region" description="Pore-forming; Name=Pore-forming 2" evidence="19">
    <location>
        <begin position="263"/>
        <end position="294"/>
    </location>
</feature>
<feature type="transmembrane region" description="Helical" evidence="2">
    <location>
        <begin position="299"/>
        <end position="319"/>
    </location>
</feature>
<feature type="topological domain" description="Cytoplasmic" evidence="2">
    <location>
        <begin position="320"/>
        <end position="538"/>
    </location>
</feature>
<feature type="region of interest" description="Selectivity filter 1" evidence="17">
    <location>
        <begin position="167"/>
        <end position="172"/>
    </location>
</feature>
<feature type="region of interest" description="Selectivity filter 2" evidence="17">
    <location>
        <begin position="276"/>
        <end position="281"/>
    </location>
</feature>
<feature type="region of interest" description="Disordered" evidence="3">
    <location>
        <begin position="412"/>
        <end position="443"/>
    </location>
</feature>
<feature type="region of interest" description="Disordered" evidence="3">
    <location>
        <begin position="510"/>
        <end position="538"/>
    </location>
</feature>
<feature type="compositionally biased region" description="Polar residues" evidence="3">
    <location>
        <begin position="412"/>
        <end position="421"/>
    </location>
</feature>
<feature type="compositionally biased region" description="Basic and acidic residues" evidence="3">
    <location>
        <begin position="522"/>
        <end position="538"/>
    </location>
</feature>
<feature type="binding site" evidence="7 20">
    <location>
        <position position="167"/>
    </location>
    <ligand>
        <name>K(+)</name>
        <dbReference type="ChEBI" id="CHEBI:29103"/>
        <label>1</label>
    </ligand>
</feature>
<feature type="binding site" evidence="7 20">
    <location>
        <position position="167"/>
    </location>
    <ligand>
        <name>K(+)</name>
        <dbReference type="ChEBI" id="CHEBI:29103"/>
        <label>4</label>
    </ligand>
</feature>
<feature type="binding site" evidence="7 20">
    <location>
        <position position="168"/>
    </location>
    <ligand>
        <name>K(+)</name>
        <dbReference type="ChEBI" id="CHEBI:29103"/>
        <label>1</label>
    </ligand>
</feature>
<feature type="binding site" evidence="7 20">
    <location>
        <position position="168"/>
    </location>
    <ligand>
        <name>K(+)</name>
        <dbReference type="ChEBI" id="CHEBI:29103"/>
        <label>2</label>
    </ligand>
</feature>
<feature type="binding site" evidence="7 20">
    <location>
        <position position="169"/>
    </location>
    <ligand>
        <name>K(+)</name>
        <dbReference type="ChEBI" id="CHEBI:29103"/>
        <label>2</label>
    </ligand>
</feature>
<feature type="binding site" evidence="7 20">
    <location>
        <position position="169"/>
    </location>
    <ligand>
        <name>K(+)</name>
        <dbReference type="ChEBI" id="CHEBI:29103"/>
        <label>3</label>
    </ligand>
</feature>
<feature type="binding site" evidence="7 20">
    <location>
        <position position="170"/>
    </location>
    <ligand>
        <name>K(+)</name>
        <dbReference type="ChEBI" id="CHEBI:29103"/>
        <label>3</label>
    </ligand>
</feature>
<feature type="binding site" evidence="7 20">
    <location>
        <position position="276"/>
    </location>
    <ligand>
        <name>K(+)</name>
        <dbReference type="ChEBI" id="CHEBI:29103"/>
        <label>1</label>
    </ligand>
</feature>
<feature type="binding site" evidence="7 20">
    <location>
        <position position="276"/>
    </location>
    <ligand>
        <name>K(+)</name>
        <dbReference type="ChEBI" id="CHEBI:29103"/>
        <label>4</label>
    </ligand>
</feature>
<feature type="binding site" evidence="7 20">
    <location>
        <position position="277"/>
    </location>
    <ligand>
        <name>K(+)</name>
        <dbReference type="ChEBI" id="CHEBI:29103"/>
        <label>1</label>
    </ligand>
</feature>
<feature type="binding site" evidence="7 20">
    <location>
        <position position="277"/>
    </location>
    <ligand>
        <name>K(+)</name>
        <dbReference type="ChEBI" id="CHEBI:29103"/>
        <label>2</label>
    </ligand>
</feature>
<feature type="binding site" evidence="7 20">
    <location>
        <position position="278"/>
    </location>
    <ligand>
        <name>K(+)</name>
        <dbReference type="ChEBI" id="CHEBI:29103"/>
        <label>2</label>
    </ligand>
</feature>
<feature type="binding site" evidence="7 20">
    <location>
        <position position="278"/>
    </location>
    <ligand>
        <name>K(+)</name>
        <dbReference type="ChEBI" id="CHEBI:29103"/>
        <label>3</label>
    </ligand>
</feature>
<feature type="binding site" evidence="7 20">
    <location>
        <position position="279"/>
    </location>
    <ligand>
        <name>K(+)</name>
        <dbReference type="ChEBI" id="CHEBI:29103"/>
        <label>3</label>
    </ligand>
</feature>
<feature type="site" description="pH sensor" evidence="1">
    <location>
        <position position="151"/>
    </location>
</feature>
<feature type="glycosylation site" description="N-linked (GlcNAc...) asparagine" evidence="2">
    <location>
        <position position="144"/>
    </location>
</feature>
<feature type="glycosylation site" description="N-linked (GlcNAc...) asparagine" evidence="2">
    <location>
        <position position="147"/>
    </location>
</feature>
<feature type="glycosylation site" description="N-linked (GlcNAc...) asparagine" evidence="2">
    <location>
        <position position="148"/>
    </location>
</feature>
<feature type="disulfide bond" description="Interchain (with C-118)" evidence="7 19">
    <location>
        <position position="118"/>
    </location>
</feature>
<feature type="splice variant" id="VSP_006697" description="In isoform B." evidence="11 13 14">
    <original>MFFLYTDFFLSL</original>
    <variation>MEDGFKGDRTEGCRSDS</variation>
    <location>
        <begin position="1"/>
        <end position="12"/>
    </location>
</feature>
<feature type="splice variant" id="VSP_006698" description="In isoform C." evidence="11 12 14">
    <original>MFFLYTDFFLSL</original>
    <variation>MKFPIETPRKQVNWDPK</variation>
    <location>
        <begin position="1"/>
        <end position="12"/>
    </location>
</feature>
<feature type="sequence variant" id="VAR_060216" description="In dbSNP:rs398263.">
    <original>K</original>
    <variation>Q</variation>
    <location>
        <position position="70"/>
    </location>
</feature>
<feature type="sequence variant" id="VAR_052428" description="In dbSNP:rs17762463." evidence="6">
    <original>A</original>
    <variation>T</variation>
    <location>
        <position position="512"/>
    </location>
</feature>
<feature type="mutagenesis site" description="Loss of channel gating by extracellular pH." evidence="7">
    <original>E</original>
    <variation>Q</variation>
    <location>
        <position position="98"/>
    </location>
</feature>
<feature type="mutagenesis site" description="Loss of channel gating by extracellular pH." evidence="7">
    <original>H</original>
    <variation>A</variation>
    <location>
        <position position="151"/>
    </location>
</feature>
<feature type="mutagenesis site" description="Loss of channel gating by extracellular pH." evidence="7">
    <original>A</original>
    <variation>P</variation>
    <location>
        <position position="174"/>
    </location>
</feature>
<feature type="mutagenesis site" description="Reduces channel gating by mechanical membrane stretch." evidence="7">
    <original>F</original>
    <variation>A</variation>
    <location>
        <position position="210"/>
    </location>
</feature>
<feature type="mutagenesis site" description="Reduces channel gating by mechanical membrane stretch." evidence="7">
    <original>R</original>
    <variation>A</variation>
    <location>
        <position position="232"/>
    </location>
</feature>
<feature type="mutagenesis site" description="No effect on channel gating by mechanical membrane stretch." evidence="7">
    <original>F</original>
    <variation>A</variation>
    <location>
        <position position="239"/>
    </location>
</feature>
<feature type="mutagenesis site" description="Near complete loss of channel gating by mechanical membrane stretch." evidence="7">
    <original>Y</original>
    <variation>A</variation>
    <location>
        <position position="310"/>
    </location>
</feature>
<feature type="mutagenesis site" description="Reduces channel gating by mechanical membrane stretch." evidence="7">
    <original>Y</original>
    <variation>F</variation>
    <location>
        <position position="310"/>
    </location>
</feature>
<feature type="mutagenesis site" description="Reduces norfluoxetine inhibition." evidence="7">
    <original>L</original>
    <variation>W</variation>
    <location>
        <position position="315"/>
    </location>
</feature>
<feature type="mutagenesis site" description="Reduces channel gating by mechanical membrane stretch." evidence="7">
    <original>M</original>
    <variation>A</variation>
    <location>
        <position position="317"/>
    </location>
</feature>
<feature type="mutagenesis site" description="Reduces channel gating by mechanical membrane stretch." evidence="7">
    <original>W</original>
    <variation>A</variation>
    <location>
        <position position="321"/>
    </location>
</feature>
<feature type="sequence conflict" description="In Ref. 2; AAL95705/AAL95706." evidence="16" ref="2">
    <original>E</original>
    <variation>G</variation>
    <location>
        <position position="529"/>
    </location>
</feature>
<feature type="helix" evidence="23">
    <location>
        <begin position="70"/>
        <end position="100"/>
    </location>
</feature>
<feature type="helix" evidence="23">
    <location>
        <begin position="105"/>
        <end position="115"/>
    </location>
</feature>
<feature type="helix" evidence="23">
    <location>
        <begin position="121"/>
        <end position="133"/>
    </location>
</feature>
<feature type="turn" evidence="22">
    <location>
        <begin position="145"/>
        <end position="148"/>
    </location>
</feature>
<feature type="strand" evidence="21">
    <location>
        <begin position="151"/>
        <end position="153"/>
    </location>
</feature>
<feature type="helix" evidence="23">
    <location>
        <begin position="154"/>
        <end position="165"/>
    </location>
</feature>
<feature type="helix" evidence="23">
    <location>
        <begin position="178"/>
        <end position="223"/>
    </location>
</feature>
<feature type="helix" evidence="23">
    <location>
        <begin position="228"/>
        <end position="247"/>
    </location>
</feature>
<feature type="helix" evidence="23">
    <location>
        <begin position="249"/>
        <end position="259"/>
    </location>
</feature>
<feature type="helix" evidence="23">
    <location>
        <begin position="263"/>
        <end position="274"/>
    </location>
</feature>
<feature type="strand" evidence="23">
    <location>
        <begin position="280"/>
        <end position="282"/>
    </location>
</feature>
<feature type="strand" evidence="24">
    <location>
        <begin position="288"/>
        <end position="290"/>
    </location>
</feature>
<feature type="helix" evidence="23">
    <location>
        <begin position="296"/>
        <end position="327"/>
    </location>
</feature>
<feature type="helix" evidence="23">
    <location>
        <begin position="329"/>
        <end position="333"/>
    </location>
</feature>
<proteinExistence type="evidence at protein level"/>
<accession>P57789</accession>
<accession>B2R8T4</accession>
<accession>B2RCT3</accession>
<accession>B5TJL4</accession>
<accession>Q6B014</accession>
<accession>Q8TDK7</accession>
<accession>Q8TDK8</accession>
<accession>Q9HB59</accession>